<comment type="function">
    <text evidence="1">Involved in chemotaxis. Part of a chemotaxis signal transduction system that modulates chemotaxis in response to various stimuli. Catalyzes the demethylation of specific methylglutamate residues introduced into the chemoreceptors (methyl-accepting chemotaxis proteins or MCP) by CheR. Also mediates the irreversible deamidation of specific glutamine residues to glutamic acid.</text>
</comment>
<comment type="catalytic activity">
    <reaction evidence="1">
        <text>[protein]-L-glutamate 5-O-methyl ester + H2O = L-glutamyl-[protein] + methanol + H(+)</text>
        <dbReference type="Rhea" id="RHEA:23236"/>
        <dbReference type="Rhea" id="RHEA-COMP:10208"/>
        <dbReference type="Rhea" id="RHEA-COMP:10311"/>
        <dbReference type="ChEBI" id="CHEBI:15377"/>
        <dbReference type="ChEBI" id="CHEBI:15378"/>
        <dbReference type="ChEBI" id="CHEBI:17790"/>
        <dbReference type="ChEBI" id="CHEBI:29973"/>
        <dbReference type="ChEBI" id="CHEBI:82795"/>
        <dbReference type="EC" id="3.1.1.61"/>
    </reaction>
</comment>
<comment type="catalytic activity">
    <reaction evidence="1">
        <text>L-glutaminyl-[protein] + H2O = L-glutamyl-[protein] + NH4(+)</text>
        <dbReference type="Rhea" id="RHEA:16441"/>
        <dbReference type="Rhea" id="RHEA-COMP:10207"/>
        <dbReference type="Rhea" id="RHEA-COMP:10208"/>
        <dbReference type="ChEBI" id="CHEBI:15377"/>
        <dbReference type="ChEBI" id="CHEBI:28938"/>
        <dbReference type="ChEBI" id="CHEBI:29973"/>
        <dbReference type="ChEBI" id="CHEBI:30011"/>
        <dbReference type="EC" id="3.5.1.44"/>
    </reaction>
</comment>
<comment type="subcellular location">
    <subcellularLocation>
        <location evidence="1">Cytoplasm</location>
    </subcellularLocation>
</comment>
<comment type="domain">
    <text evidence="1">Contains a C-terminal catalytic domain, and an N-terminal region which modulates catalytic activity.</text>
</comment>
<comment type="PTM">
    <text evidence="1">Phosphorylated by CheA. Phosphorylation of the N-terminal regulatory domain activates the methylesterase activity.</text>
</comment>
<comment type="similarity">
    <text evidence="1">Belongs to the CheB family.</text>
</comment>
<name>CHEB1_PARM1</name>
<keyword id="KW-0145">Chemotaxis</keyword>
<keyword id="KW-0963">Cytoplasm</keyword>
<keyword id="KW-0378">Hydrolase</keyword>
<keyword id="KW-0597">Phosphoprotein</keyword>
<organism>
    <name type="scientific">Paramagnetospirillum magneticum (strain ATCC 700264 / AMB-1)</name>
    <name type="common">Magnetospirillum magneticum</name>
    <dbReference type="NCBI Taxonomy" id="342108"/>
    <lineage>
        <taxon>Bacteria</taxon>
        <taxon>Pseudomonadati</taxon>
        <taxon>Pseudomonadota</taxon>
        <taxon>Alphaproteobacteria</taxon>
        <taxon>Rhodospirillales</taxon>
        <taxon>Magnetospirillaceae</taxon>
        <taxon>Paramagnetospirillum</taxon>
    </lineage>
</organism>
<gene>
    <name evidence="1" type="primary">cheB1</name>
    <name type="ordered locus">amb0323</name>
</gene>
<proteinExistence type="inferred from homology"/>
<reference key="1">
    <citation type="journal article" date="2005" name="DNA Res.">
        <title>Complete genome sequence of the facultative anaerobic magnetotactic bacterium Magnetospirillum sp. strain AMB-1.</title>
        <authorList>
            <person name="Matsunaga T."/>
            <person name="Okamura Y."/>
            <person name="Fukuda Y."/>
            <person name="Wahyudi A.T."/>
            <person name="Murase Y."/>
            <person name="Takeyama H."/>
        </authorList>
    </citation>
    <scope>NUCLEOTIDE SEQUENCE [LARGE SCALE GENOMIC DNA]</scope>
    <source>
        <strain>ATCC 700264 / AMB-1</strain>
    </source>
</reference>
<accession>Q2WAJ8</accession>
<feature type="chain" id="PRO_0000264286" description="Protein-glutamate methylesterase/protein-glutamine glutaminase 1">
    <location>
        <begin position="1"/>
        <end position="381"/>
    </location>
</feature>
<feature type="domain" description="Response regulatory" evidence="1">
    <location>
        <begin position="14"/>
        <end position="132"/>
    </location>
</feature>
<feature type="domain" description="CheB-type methylesterase" evidence="1">
    <location>
        <begin position="188"/>
        <end position="381"/>
    </location>
</feature>
<feature type="region of interest" description="Disordered" evidence="2">
    <location>
        <begin position="143"/>
        <end position="173"/>
    </location>
</feature>
<feature type="compositionally biased region" description="Low complexity" evidence="2">
    <location>
        <begin position="144"/>
        <end position="153"/>
    </location>
</feature>
<feature type="active site" evidence="1">
    <location>
        <position position="199"/>
    </location>
</feature>
<feature type="active site" evidence="1">
    <location>
        <position position="227"/>
    </location>
</feature>
<feature type="active site" evidence="1">
    <location>
        <position position="323"/>
    </location>
</feature>
<feature type="modified residue" description="4-aspartylphosphate" evidence="1">
    <location>
        <position position="65"/>
    </location>
</feature>
<protein>
    <recommendedName>
        <fullName evidence="1">Protein-glutamate methylesterase/protein-glutamine glutaminase 1</fullName>
        <ecNumber evidence="1">3.1.1.61</ecNumber>
        <ecNumber evidence="1">3.5.1.44</ecNumber>
    </recommendedName>
</protein>
<evidence type="ECO:0000255" key="1">
    <source>
        <dbReference type="HAMAP-Rule" id="MF_00099"/>
    </source>
</evidence>
<evidence type="ECO:0000256" key="2">
    <source>
        <dbReference type="SAM" id="MobiDB-lite"/>
    </source>
</evidence>
<dbReference type="EC" id="3.1.1.61" evidence="1"/>
<dbReference type="EC" id="3.5.1.44" evidence="1"/>
<dbReference type="EMBL" id="AP007255">
    <property type="protein sequence ID" value="BAE49127.1"/>
    <property type="molecule type" value="Genomic_DNA"/>
</dbReference>
<dbReference type="RefSeq" id="WP_011382770.1">
    <property type="nucleotide sequence ID" value="NC_007626.1"/>
</dbReference>
<dbReference type="SMR" id="Q2WAJ8"/>
<dbReference type="STRING" id="342108.amb0323"/>
<dbReference type="KEGG" id="mag:amb0323"/>
<dbReference type="HOGENOM" id="CLU_000445_51_0_5"/>
<dbReference type="OrthoDB" id="9793421at2"/>
<dbReference type="Proteomes" id="UP000007058">
    <property type="component" value="Chromosome"/>
</dbReference>
<dbReference type="GO" id="GO:0005737">
    <property type="term" value="C:cytoplasm"/>
    <property type="evidence" value="ECO:0007669"/>
    <property type="project" value="UniProtKB-SubCell"/>
</dbReference>
<dbReference type="GO" id="GO:0000156">
    <property type="term" value="F:phosphorelay response regulator activity"/>
    <property type="evidence" value="ECO:0007669"/>
    <property type="project" value="InterPro"/>
</dbReference>
<dbReference type="GO" id="GO:0008984">
    <property type="term" value="F:protein-glutamate methylesterase activity"/>
    <property type="evidence" value="ECO:0007669"/>
    <property type="project" value="UniProtKB-UniRule"/>
</dbReference>
<dbReference type="GO" id="GO:0050568">
    <property type="term" value="F:protein-glutamine glutaminase activity"/>
    <property type="evidence" value="ECO:0007669"/>
    <property type="project" value="UniProtKB-UniRule"/>
</dbReference>
<dbReference type="GO" id="GO:0006935">
    <property type="term" value="P:chemotaxis"/>
    <property type="evidence" value="ECO:0007669"/>
    <property type="project" value="UniProtKB-UniRule"/>
</dbReference>
<dbReference type="CDD" id="cd16432">
    <property type="entry name" value="CheB_Rec"/>
    <property type="match status" value="1"/>
</dbReference>
<dbReference type="CDD" id="cd17541">
    <property type="entry name" value="REC_CheB-like"/>
    <property type="match status" value="1"/>
</dbReference>
<dbReference type="Gene3D" id="3.40.50.2300">
    <property type="match status" value="1"/>
</dbReference>
<dbReference type="Gene3D" id="3.40.50.180">
    <property type="entry name" value="Methylesterase CheB, C-terminal domain"/>
    <property type="match status" value="1"/>
</dbReference>
<dbReference type="HAMAP" id="MF_00099">
    <property type="entry name" value="CheB_chemtxs"/>
    <property type="match status" value="1"/>
</dbReference>
<dbReference type="InterPro" id="IPR008248">
    <property type="entry name" value="CheB-like"/>
</dbReference>
<dbReference type="InterPro" id="IPR035909">
    <property type="entry name" value="CheB_C"/>
</dbReference>
<dbReference type="InterPro" id="IPR011006">
    <property type="entry name" value="CheY-like_superfamily"/>
</dbReference>
<dbReference type="InterPro" id="IPR000673">
    <property type="entry name" value="Sig_transdc_resp-reg_Me-estase"/>
</dbReference>
<dbReference type="InterPro" id="IPR001789">
    <property type="entry name" value="Sig_transdc_resp-reg_receiver"/>
</dbReference>
<dbReference type="NCBIfam" id="NF001965">
    <property type="entry name" value="PRK00742.1"/>
    <property type="match status" value="1"/>
</dbReference>
<dbReference type="PANTHER" id="PTHR42872">
    <property type="entry name" value="PROTEIN-GLUTAMATE METHYLESTERASE/PROTEIN-GLUTAMINE GLUTAMINASE"/>
    <property type="match status" value="1"/>
</dbReference>
<dbReference type="PANTHER" id="PTHR42872:SF3">
    <property type="entry name" value="PROTEIN-GLUTAMATE METHYLESTERASE_PROTEIN-GLUTAMINE GLUTAMINASE 1"/>
    <property type="match status" value="1"/>
</dbReference>
<dbReference type="Pfam" id="PF01339">
    <property type="entry name" value="CheB_methylest"/>
    <property type="match status" value="1"/>
</dbReference>
<dbReference type="Pfam" id="PF00072">
    <property type="entry name" value="Response_reg"/>
    <property type="match status" value="1"/>
</dbReference>
<dbReference type="PIRSF" id="PIRSF000876">
    <property type="entry name" value="RR_chemtxs_CheB"/>
    <property type="match status" value="1"/>
</dbReference>
<dbReference type="SMART" id="SM00448">
    <property type="entry name" value="REC"/>
    <property type="match status" value="1"/>
</dbReference>
<dbReference type="SUPFAM" id="SSF52172">
    <property type="entry name" value="CheY-like"/>
    <property type="match status" value="1"/>
</dbReference>
<dbReference type="SUPFAM" id="SSF52738">
    <property type="entry name" value="Methylesterase CheB, C-terminal domain"/>
    <property type="match status" value="1"/>
</dbReference>
<dbReference type="PROSITE" id="PS50122">
    <property type="entry name" value="CHEB"/>
    <property type="match status" value="1"/>
</dbReference>
<dbReference type="PROSITE" id="PS50110">
    <property type="entry name" value="RESPONSE_REGULATORY"/>
    <property type="match status" value="1"/>
</dbReference>
<sequence length="381" mass="39765">MAIDSPSPATDSIRVMLVDDSAVVRGLVTRILEGEAGIQVVASVGNGQMALASLERNEIDVVILDIEMPVMDGLTALPKLLQIDPGLKVIMQSTLTLKGADVSLRAMQMGAADYIPKPTSTRDLAGGVDFKSELVTKIRALGQARRAGARPARPGGPPATRPVIASTSPRTPVPIHPPGPLQLRSNTPEPPDIIAIGSSTGGPQALFTVLGTMKAGTVRQPIVITQHMPATFTTILAEHIGRVSGWEAREAQDGEAIRGGRVYIAPGDFHMVVETKGTDKVLRLNKNPPENFCRPAVDPMLRSIAAAYGKRVLACILTGMGADGMKGGQAVVASGGTVIAQDEASSVVWGMPGAAATAGICSAVLPLPEIAPWIMKLAARR</sequence>